<keyword id="KW-0474">Menaquinone biosynthesis</keyword>
<keyword id="KW-0489">Methyltransferase</keyword>
<keyword id="KW-0949">S-adenosyl-L-methionine</keyword>
<keyword id="KW-0808">Transferase</keyword>
<reference key="1">
    <citation type="journal article" date="2012" name="BMC Genomics">
        <title>Comparative genomics and transcriptomics of lineages I, II, and III strains of Listeria monocytogenes.</title>
        <authorList>
            <person name="Hain T."/>
            <person name="Ghai R."/>
            <person name="Billion A."/>
            <person name="Kuenne C.T."/>
            <person name="Steinweg C."/>
            <person name="Izar B."/>
            <person name="Mohamed W."/>
            <person name="Mraheil M."/>
            <person name="Domann E."/>
            <person name="Schaffrath S."/>
            <person name="Karst U."/>
            <person name="Goesmann A."/>
            <person name="Oehm S."/>
            <person name="Puhler A."/>
            <person name="Merkl R."/>
            <person name="Vorwerk S."/>
            <person name="Glaser P."/>
            <person name="Garrido P."/>
            <person name="Rusniok C."/>
            <person name="Buchrieser C."/>
            <person name="Goebel W."/>
            <person name="Chakraborty T."/>
        </authorList>
    </citation>
    <scope>NUCLEOTIDE SEQUENCE [LARGE SCALE GENOMIC DNA]</scope>
    <source>
        <strain>CLIP80459</strain>
    </source>
</reference>
<protein>
    <recommendedName>
        <fullName evidence="1">Demethylmenaquinone methyltransferase</fullName>
        <ecNumber evidence="1">2.1.1.163</ecNumber>
    </recommendedName>
</protein>
<dbReference type="EC" id="2.1.1.163" evidence="1"/>
<dbReference type="EMBL" id="FM242711">
    <property type="protein sequence ID" value="CAS05706.1"/>
    <property type="molecule type" value="Genomic_DNA"/>
</dbReference>
<dbReference type="RefSeq" id="WP_003726790.1">
    <property type="nucleotide sequence ID" value="NC_012488.1"/>
</dbReference>
<dbReference type="SMR" id="C1KWN1"/>
<dbReference type="GeneID" id="93239845"/>
<dbReference type="KEGG" id="lmc:Lm4b_01948"/>
<dbReference type="HOGENOM" id="CLU_037990_0_0_9"/>
<dbReference type="UniPathway" id="UPA00079">
    <property type="reaction ID" value="UER00169"/>
</dbReference>
<dbReference type="GO" id="GO:0043770">
    <property type="term" value="F:demethylmenaquinone methyltransferase activity"/>
    <property type="evidence" value="ECO:0007669"/>
    <property type="project" value="UniProtKB-UniRule"/>
</dbReference>
<dbReference type="GO" id="GO:0009234">
    <property type="term" value="P:menaquinone biosynthetic process"/>
    <property type="evidence" value="ECO:0007669"/>
    <property type="project" value="UniProtKB-UniRule"/>
</dbReference>
<dbReference type="GO" id="GO:0032259">
    <property type="term" value="P:methylation"/>
    <property type="evidence" value="ECO:0007669"/>
    <property type="project" value="UniProtKB-KW"/>
</dbReference>
<dbReference type="CDD" id="cd02440">
    <property type="entry name" value="AdoMet_MTases"/>
    <property type="match status" value="1"/>
</dbReference>
<dbReference type="FunFam" id="3.40.50.150:FF:000086">
    <property type="entry name" value="Demethylmenaquinone methyltransferase"/>
    <property type="match status" value="1"/>
</dbReference>
<dbReference type="Gene3D" id="3.40.50.150">
    <property type="entry name" value="Vaccinia Virus protein VP39"/>
    <property type="match status" value="1"/>
</dbReference>
<dbReference type="HAMAP" id="MF_01813">
    <property type="entry name" value="MenG_UbiE_methyltr"/>
    <property type="match status" value="1"/>
</dbReference>
<dbReference type="InterPro" id="IPR014122">
    <property type="entry name" value="MenG_heptapren"/>
</dbReference>
<dbReference type="InterPro" id="IPR029063">
    <property type="entry name" value="SAM-dependent_MTases_sf"/>
</dbReference>
<dbReference type="InterPro" id="IPR004033">
    <property type="entry name" value="UbiE/COQ5_MeTrFase"/>
</dbReference>
<dbReference type="InterPro" id="IPR023576">
    <property type="entry name" value="UbiE/COQ5_MeTrFase_CS"/>
</dbReference>
<dbReference type="NCBIfam" id="TIGR02752">
    <property type="entry name" value="MenG_heptapren"/>
    <property type="match status" value="1"/>
</dbReference>
<dbReference type="NCBIfam" id="TIGR01934">
    <property type="entry name" value="MenG_MenH_UbiE"/>
    <property type="match status" value="1"/>
</dbReference>
<dbReference type="NCBIfam" id="NF001243">
    <property type="entry name" value="PRK00216.1-4"/>
    <property type="match status" value="1"/>
</dbReference>
<dbReference type="NCBIfam" id="NF001244">
    <property type="entry name" value="PRK00216.1-5"/>
    <property type="match status" value="1"/>
</dbReference>
<dbReference type="PANTHER" id="PTHR43591:SF24">
    <property type="entry name" value="2-METHOXY-6-POLYPRENYL-1,4-BENZOQUINOL METHYLASE, MITOCHONDRIAL"/>
    <property type="match status" value="1"/>
</dbReference>
<dbReference type="PANTHER" id="PTHR43591">
    <property type="entry name" value="METHYLTRANSFERASE"/>
    <property type="match status" value="1"/>
</dbReference>
<dbReference type="Pfam" id="PF01209">
    <property type="entry name" value="Ubie_methyltran"/>
    <property type="match status" value="1"/>
</dbReference>
<dbReference type="SUPFAM" id="SSF53335">
    <property type="entry name" value="S-adenosyl-L-methionine-dependent methyltransferases"/>
    <property type="match status" value="1"/>
</dbReference>
<dbReference type="PROSITE" id="PS51608">
    <property type="entry name" value="SAM_MT_UBIE"/>
    <property type="match status" value="1"/>
</dbReference>
<dbReference type="PROSITE" id="PS01183">
    <property type="entry name" value="UBIE_1"/>
    <property type="match status" value="1"/>
</dbReference>
<dbReference type="PROSITE" id="PS01184">
    <property type="entry name" value="UBIE_2"/>
    <property type="match status" value="1"/>
</dbReference>
<name>MENG_LISMC</name>
<proteinExistence type="inferred from homology"/>
<feature type="chain" id="PRO_1000215987" description="Demethylmenaquinone methyltransferase">
    <location>
        <begin position="1"/>
        <end position="237"/>
    </location>
</feature>
<feature type="binding site" evidence="1">
    <location>
        <position position="58"/>
    </location>
    <ligand>
        <name>S-adenosyl-L-methionine</name>
        <dbReference type="ChEBI" id="CHEBI:59789"/>
    </ligand>
</feature>
<feature type="binding site" evidence="1">
    <location>
        <position position="79"/>
    </location>
    <ligand>
        <name>S-adenosyl-L-methionine</name>
        <dbReference type="ChEBI" id="CHEBI:59789"/>
    </ligand>
</feature>
<feature type="binding site" evidence="1">
    <location>
        <begin position="106"/>
        <end position="107"/>
    </location>
    <ligand>
        <name>S-adenosyl-L-methionine</name>
        <dbReference type="ChEBI" id="CHEBI:59789"/>
    </ligand>
</feature>
<evidence type="ECO:0000255" key="1">
    <source>
        <dbReference type="HAMAP-Rule" id="MF_01813"/>
    </source>
</evidence>
<gene>
    <name evidence="1" type="primary">menG</name>
    <name type="ordered locus">Lm4b_01948</name>
</gene>
<sequence length="237" mass="27330">MTETKEEKVHKVFEKISPSYDRMNSVISFKLHVKWRKETMKLMRVQKGTNVLDVCCGTADWSIMMAEEIGPEGHVTGLDFSENMLKVGREKVKEADLHNVELIHGNAMELPFPDNSFDYVTIGFGLRNVPDYMQVLREMYRVLKPGGQLACIDTSQPNIPGWKQVFNAYFRYVMPVFGKFFAKSYKEYSWLQESTREFPGMARLAEMFQEAGFSYVRYISHSGGASATHFGFKKKEQ</sequence>
<comment type="function">
    <text evidence="1">Methyltransferase required for the conversion of demethylmenaquinol (DMKH2) to menaquinol (MKH2).</text>
</comment>
<comment type="catalytic activity">
    <reaction evidence="1">
        <text>a 2-demethylmenaquinol + S-adenosyl-L-methionine = a menaquinol + S-adenosyl-L-homocysteine + H(+)</text>
        <dbReference type="Rhea" id="RHEA:42640"/>
        <dbReference type="Rhea" id="RHEA-COMP:9539"/>
        <dbReference type="Rhea" id="RHEA-COMP:9563"/>
        <dbReference type="ChEBI" id="CHEBI:15378"/>
        <dbReference type="ChEBI" id="CHEBI:18151"/>
        <dbReference type="ChEBI" id="CHEBI:55437"/>
        <dbReference type="ChEBI" id="CHEBI:57856"/>
        <dbReference type="ChEBI" id="CHEBI:59789"/>
        <dbReference type="EC" id="2.1.1.163"/>
    </reaction>
</comment>
<comment type="pathway">
    <text evidence="1">Quinol/quinone metabolism; menaquinone biosynthesis; menaquinol from 1,4-dihydroxy-2-naphthoate: step 2/2.</text>
</comment>
<comment type="similarity">
    <text evidence="1">Belongs to the class I-like SAM-binding methyltransferase superfamily. MenG/UbiE family.</text>
</comment>
<accession>C1KWN1</accession>
<organism>
    <name type="scientific">Listeria monocytogenes serotype 4b (strain CLIP80459)</name>
    <dbReference type="NCBI Taxonomy" id="568819"/>
    <lineage>
        <taxon>Bacteria</taxon>
        <taxon>Bacillati</taxon>
        <taxon>Bacillota</taxon>
        <taxon>Bacilli</taxon>
        <taxon>Bacillales</taxon>
        <taxon>Listeriaceae</taxon>
        <taxon>Listeria</taxon>
    </lineage>
</organism>